<evidence type="ECO:0000255" key="1"/>
<evidence type="ECO:0000269" key="2">
    <source>
    </source>
</evidence>
<evidence type="ECO:0000269" key="3">
    <source>
    </source>
</evidence>
<evidence type="ECO:0000269" key="4">
    <source>
    </source>
</evidence>
<evidence type="ECO:0000305" key="5"/>
<evidence type="ECO:0000305" key="6">
    <source>
    </source>
</evidence>
<name>YDBH_ECOLI</name>
<sequence length="879" mass="96835">MLGKYKAVLALLLLIILVPLTLLMTLGLWVPTLAGIWLPLGTRIALDESPRITRKGLIIPDLRYLVGDCQLAHITNASLSHPSRWLLNVGTVELDSACLAKLPQTEQSPAAPKTLAQWQAMLPNTWINIDKLIFSPWQEWQGKLSLALTSDIQQLRYQGEKVKFQGQLKGQQLTVSELDVVAFENQPPVKLVGEFAMPLVPDGLPVSGHATATLNLPQEPSLVDAELDWQENSGQLIVLARDNGDPLLDLPWQITRQQLTVSDGRWSWPYAGFPLSGRLGVKVDNWQAGLENALVSGRLSVLTQGQAGKGNAVLNFGPGKLSMDNSQLPLQLTGEAKQADLILYARLPAQLSGSLSDPTLTFEPGALLRSKGRVIDSLDIDEIRWPLAGVKVTQRGVDGRLQAILQAHENELGDFVLHMDGLANDFLPDAGRWQWRYWGKGSFTPMNATWDVAGKGEWHDSTITLTDLSTGFDQLQYGTMTVEKPRLILDKPIVWVRDAQHPSFSGALSLDAGQTLFTGGSVLPPSTLKFSVDGRDPTYFLFKGDLHAGEIGPVRVNGRWDGIRLRGNAWWPKQSLTVFQPLVPPDWKMNLRDGELYAQVAFSAAPEQGFRAGGHGVLKGGSAWMPDNQVNGVDFVLPFRFADGAWHLGTRGPVTLRIAEVINLVTAKNITADLQGRYPWTEEEPLLLTDVSVDVLGGNVLMKQLRMPQHDPALLRLNNLSSSELVSAVNPKQFAMSGAFSGALPLWLNNEKWIVKDGWLANSGPMTLRLDKDTADAVVKDNMTAGSAINWLRYMEISRSSTKINLDNLGLLTMQANITGTSRVDGKSGTVNLNYHHEENIFTLWRSLRFGDNLQAWLEQNARLPGNDCPQGKECEEKQ</sequence>
<feature type="chain" id="PRO_0000168922" description="Probable phospholipid transport protein YdbH">
    <location>
        <begin position="1"/>
        <end position="879"/>
    </location>
</feature>
<feature type="topological domain" description="Cytoplasmic" evidence="6">
    <location>
        <begin position="1"/>
        <end position="6"/>
    </location>
</feature>
<feature type="transmembrane region" description="Helical" evidence="1">
    <location>
        <begin position="7"/>
        <end position="29"/>
    </location>
</feature>
<feature type="topological domain" description="Periplasmic" evidence="6">
    <location>
        <begin position="30"/>
        <end position="879"/>
    </location>
</feature>
<feature type="sequence conflict" description="In Ref. 4." evidence="5" ref="4">
    <original>I</original>
    <variation>L</variation>
    <location>
        <position position="36"/>
    </location>
</feature>
<gene>
    <name type="primary">ydbH</name>
    <name type="ordered locus">b1381</name>
    <name type="ordered locus">JW1376</name>
</gene>
<protein>
    <recommendedName>
        <fullName evidence="5">Probable phospholipid transport protein YdbH</fullName>
    </recommendedName>
</protein>
<dbReference type="EMBL" id="U00096">
    <property type="protein sequence ID" value="AAC74463.1"/>
    <property type="molecule type" value="Genomic_DNA"/>
</dbReference>
<dbReference type="EMBL" id="AP009048">
    <property type="protein sequence ID" value="BAA14991.1"/>
    <property type="molecule type" value="Genomic_DNA"/>
</dbReference>
<dbReference type="EMBL" id="U36928">
    <property type="status" value="NOT_ANNOTATED_CDS"/>
    <property type="molecule type" value="Genomic_DNA"/>
</dbReference>
<dbReference type="PIR" id="H64888">
    <property type="entry name" value="H64888"/>
</dbReference>
<dbReference type="RefSeq" id="NP_415899.1">
    <property type="nucleotide sequence ID" value="NC_000913.3"/>
</dbReference>
<dbReference type="RefSeq" id="WP_000900941.1">
    <property type="nucleotide sequence ID" value="NZ_SSZK01000012.1"/>
</dbReference>
<dbReference type="SMR" id="P52645"/>
<dbReference type="BioGRID" id="4263108">
    <property type="interactions" value="26"/>
</dbReference>
<dbReference type="FunCoup" id="P52645">
    <property type="interactions" value="110"/>
</dbReference>
<dbReference type="IntAct" id="P52645">
    <property type="interactions" value="17"/>
</dbReference>
<dbReference type="STRING" id="511145.b1381"/>
<dbReference type="TCDB" id="9.B.121.4.1">
    <property type="family name" value="the asma (asma) family"/>
</dbReference>
<dbReference type="jPOST" id="P52645"/>
<dbReference type="PaxDb" id="511145-b1381"/>
<dbReference type="EnsemblBacteria" id="AAC74463">
    <property type="protein sequence ID" value="AAC74463"/>
    <property type="gene ID" value="b1381"/>
</dbReference>
<dbReference type="GeneID" id="945949"/>
<dbReference type="KEGG" id="ecj:JW1376"/>
<dbReference type="KEGG" id="eco:b1381"/>
<dbReference type="KEGG" id="ecoc:C3026_08070"/>
<dbReference type="PATRIC" id="fig|511145.12.peg.1444"/>
<dbReference type="EchoBASE" id="EB2972"/>
<dbReference type="eggNOG" id="COG2911">
    <property type="taxonomic scope" value="Bacteria"/>
</dbReference>
<dbReference type="HOGENOM" id="CLU_016453_0_0_6"/>
<dbReference type="InParanoid" id="P52645"/>
<dbReference type="OMA" id="ENIFQLW"/>
<dbReference type="OrthoDB" id="5596796at2"/>
<dbReference type="PhylomeDB" id="P52645"/>
<dbReference type="BioCyc" id="EcoCyc:G6703-MONOMER"/>
<dbReference type="PRO" id="PR:P52645"/>
<dbReference type="Proteomes" id="UP000000625">
    <property type="component" value="Chromosome"/>
</dbReference>
<dbReference type="GO" id="GO:0005886">
    <property type="term" value="C:plasma membrane"/>
    <property type="evidence" value="ECO:0000314"/>
    <property type="project" value="EcoCyc"/>
</dbReference>
<dbReference type="InterPro" id="IPR021730">
    <property type="entry name" value="YdbH"/>
</dbReference>
<dbReference type="NCBIfam" id="NF007971">
    <property type="entry name" value="PRK10695.1"/>
    <property type="match status" value="1"/>
</dbReference>
<dbReference type="Pfam" id="PF11739">
    <property type="entry name" value="YdbH-like"/>
    <property type="match status" value="1"/>
</dbReference>
<comment type="function">
    <text evidence="2 3 4">Involved in outer membrane lipid homeostasis (PubMed:34781743, PubMed:35226662, PubMed:38748582). Interacts with the outer membrane lipoprotein YnbE to form a functional protein bridge connecting the inner and outer membranes of the cell (PubMed:38748582). Likely transports phospholipids between the inner membrane and the outer membrane (PubMed:34781743, PubMed:35226662, PubMed:38748582). It would provide a bridge-like structure that protects phospholipids as they travel across the periplasm (PubMed:34781743).</text>
</comment>
<comment type="function">
    <text evidence="2">TamB, YdbH and YhdP are redundant, but not equivalent, in performing an essential function for growth and maintaining lipid homeostasis in the outer membrane (PubMed:34781743). Any of these three proteins is sufficient for growth (PubMed:34781743).</text>
</comment>
<comment type="subunit">
    <text evidence="4">Interacts with the outer membrane lipoprotein YnbE.</text>
</comment>
<comment type="subcellular location">
    <subcellularLocation>
        <location evidence="4">Cell inner membrane</location>
        <topology evidence="1">Single-pass membrane protein</topology>
        <orientation evidence="6">Periplasmic side</orientation>
    </subcellularLocation>
</comment>
<comment type="disruption phenotype">
    <text evidence="2 3">The single mutant does not exhibit growth defects and does not show outer membrane permeability defects (PubMed:34781743). Deletion of tamB, ydbH and yhdP is lethal (PubMed:34781743, PubMed:35226662).</text>
</comment>
<reference key="1">
    <citation type="journal article" date="1996" name="DNA Res.">
        <title>A 570-kb DNA sequence of the Escherichia coli K-12 genome corresponding to the 28.0-40.1 min region on the linkage map.</title>
        <authorList>
            <person name="Aiba H."/>
            <person name="Baba T."/>
            <person name="Fujita K."/>
            <person name="Hayashi K."/>
            <person name="Inada T."/>
            <person name="Isono K."/>
            <person name="Itoh T."/>
            <person name="Kasai H."/>
            <person name="Kashimoto K."/>
            <person name="Kimura S."/>
            <person name="Kitakawa M."/>
            <person name="Kitagawa M."/>
            <person name="Makino K."/>
            <person name="Miki T."/>
            <person name="Mizobuchi K."/>
            <person name="Mori H."/>
            <person name="Mori T."/>
            <person name="Motomura K."/>
            <person name="Nakade S."/>
            <person name="Nakamura Y."/>
            <person name="Nashimoto H."/>
            <person name="Nishio Y."/>
            <person name="Oshima T."/>
            <person name="Saito N."/>
            <person name="Sampei G."/>
            <person name="Seki Y."/>
            <person name="Sivasundaram S."/>
            <person name="Tagami H."/>
            <person name="Takeda J."/>
            <person name="Takemoto K."/>
            <person name="Takeuchi Y."/>
            <person name="Wada C."/>
            <person name="Yamamoto Y."/>
            <person name="Horiuchi T."/>
        </authorList>
    </citation>
    <scope>NUCLEOTIDE SEQUENCE [LARGE SCALE GENOMIC DNA]</scope>
    <source>
        <strain>K12 / W3110 / ATCC 27325 / DSM 5911</strain>
    </source>
</reference>
<reference key="2">
    <citation type="journal article" date="1997" name="Science">
        <title>The complete genome sequence of Escherichia coli K-12.</title>
        <authorList>
            <person name="Blattner F.R."/>
            <person name="Plunkett G. III"/>
            <person name="Bloch C.A."/>
            <person name="Perna N.T."/>
            <person name="Burland V."/>
            <person name="Riley M."/>
            <person name="Collado-Vides J."/>
            <person name="Glasner J.D."/>
            <person name="Rode C.K."/>
            <person name="Mayhew G.F."/>
            <person name="Gregor J."/>
            <person name="Davis N.W."/>
            <person name="Kirkpatrick H.A."/>
            <person name="Goeden M.A."/>
            <person name="Rose D.J."/>
            <person name="Mau B."/>
            <person name="Shao Y."/>
        </authorList>
    </citation>
    <scope>NUCLEOTIDE SEQUENCE [LARGE SCALE GENOMIC DNA]</scope>
    <source>
        <strain>K12 / MG1655 / ATCC 47076</strain>
    </source>
</reference>
<reference key="3">
    <citation type="journal article" date="2006" name="Mol. Syst. Biol.">
        <title>Highly accurate genome sequences of Escherichia coli K-12 strains MG1655 and W3110.</title>
        <authorList>
            <person name="Hayashi K."/>
            <person name="Morooka N."/>
            <person name="Yamamoto Y."/>
            <person name="Fujita K."/>
            <person name="Isono K."/>
            <person name="Choi S."/>
            <person name="Ohtsubo E."/>
            <person name="Baba T."/>
            <person name="Wanner B.L."/>
            <person name="Mori H."/>
            <person name="Horiuchi T."/>
        </authorList>
    </citation>
    <scope>NUCLEOTIDE SEQUENCE [LARGE SCALE GENOMIC DNA]</scope>
    <source>
        <strain>K12 / W3110 / ATCC 27325 / DSM 5911</strain>
    </source>
</reference>
<reference key="4">
    <citation type="journal article" date="1997" name="Microbiology">
        <title>The ldhA gene encoding the fermentative lactate dehydrogenase of Escherichia coli.</title>
        <authorList>
            <person name="Bunch P.K."/>
            <person name="Mat-Jan F."/>
            <person name="Lee N."/>
            <person name="Clark D.P."/>
        </authorList>
    </citation>
    <scope>NUCLEOTIDE SEQUENCE [GENOMIC DNA] OF 1-331</scope>
    <source>
        <strain>K12</strain>
    </source>
</reference>
<reference key="5">
    <citation type="unpublished observations" date="1996-03">
        <authorList>
            <person name="Rudd K.E."/>
        </authorList>
    </citation>
    <scope>IDENTIFICATION</scope>
</reference>
<reference key="6">
    <citation type="journal article" date="2021" name="MBio">
        <title>YhdP, TamB, and YdbH Are Redundant but Essential for Growth and Lipid Homeostasis of the Gram-Negative Outer Membrane.</title>
        <authorList>
            <person name="Ruiz N."/>
            <person name="Davis R.M."/>
            <person name="Kumar S."/>
        </authorList>
    </citation>
    <scope>FUNCTION</scope>
    <scope>DISRUPTION PHENOTYPE</scope>
    <source>
        <strain>K12 / MG1655 / ATCC 47076</strain>
    </source>
</reference>
<reference key="7">
    <citation type="journal article" date="2022" name="PLoS Genet.">
        <title>Absence of YhdP, TamB, and YdbH leads to defects in glycerophospholipid transport and cell morphology in Gram-negative bacteria.</title>
        <authorList>
            <person name="Douglass M.V."/>
            <person name="McLean A.B."/>
            <person name="Trent M.S."/>
        </authorList>
    </citation>
    <scope>FUNCTION</scope>
    <scope>DISRUPTION PHENOTYPE</scope>
    <source>
        <strain>K12</strain>
    </source>
</reference>
<reference key="8">
    <citation type="journal article" date="2024" name="Proc. Natl. Acad. Sci. U.S.A.">
        <title>YdbH and YnbE form an intermembrane bridge to maintain lipid homeostasis in the outer membrane of Escherichia coli.</title>
        <authorList>
            <person name="Kumar S."/>
            <person name="Davis R.M."/>
            <person name="Ruiz N."/>
        </authorList>
    </citation>
    <scope>FUNCTION</scope>
    <scope>INTERACTION WITH YNBE</scope>
    <scope>SUBCELLULAR LOCATION</scope>
    <source>
        <strain>K12 / MG1655 / ATCC 47076</strain>
    </source>
</reference>
<accession>P52645</accession>
<accession>P76855</accession>
<accession>P77502</accession>
<proteinExistence type="evidence at protein level"/>
<organism>
    <name type="scientific">Escherichia coli (strain K12)</name>
    <dbReference type="NCBI Taxonomy" id="83333"/>
    <lineage>
        <taxon>Bacteria</taxon>
        <taxon>Pseudomonadati</taxon>
        <taxon>Pseudomonadota</taxon>
        <taxon>Gammaproteobacteria</taxon>
        <taxon>Enterobacterales</taxon>
        <taxon>Enterobacteriaceae</taxon>
        <taxon>Escherichia</taxon>
    </lineage>
</organism>
<keyword id="KW-0997">Cell inner membrane</keyword>
<keyword id="KW-1003">Cell membrane</keyword>
<keyword id="KW-0445">Lipid transport</keyword>
<keyword id="KW-0472">Membrane</keyword>
<keyword id="KW-1185">Reference proteome</keyword>
<keyword id="KW-0812">Transmembrane</keyword>
<keyword id="KW-1133">Transmembrane helix</keyword>
<keyword id="KW-0813">Transport</keyword>